<feature type="chain" id="PRO_1000132534" description="Imidazole glycerol phosphate synthase subunit HisH">
    <location>
        <begin position="1"/>
        <end position="209"/>
    </location>
</feature>
<feature type="domain" description="Glutamine amidotransferase type-1" evidence="1">
    <location>
        <begin position="1"/>
        <end position="205"/>
    </location>
</feature>
<feature type="active site" description="Nucleophile" evidence="1">
    <location>
        <position position="79"/>
    </location>
</feature>
<feature type="active site" evidence="1">
    <location>
        <position position="180"/>
    </location>
</feature>
<feature type="active site" evidence="1">
    <location>
        <position position="182"/>
    </location>
</feature>
<comment type="function">
    <text evidence="1">IGPS catalyzes the conversion of PRFAR and glutamine to IGP, AICAR and glutamate. The HisH subunit catalyzes the hydrolysis of glutamine to glutamate and ammonia as part of the synthesis of IGP and AICAR. The resulting ammonia molecule is channeled to the active site of HisF.</text>
</comment>
<comment type="catalytic activity">
    <reaction evidence="1">
        <text>5-[(5-phospho-1-deoxy-D-ribulos-1-ylimino)methylamino]-1-(5-phospho-beta-D-ribosyl)imidazole-4-carboxamide + L-glutamine = D-erythro-1-(imidazol-4-yl)glycerol 3-phosphate + 5-amino-1-(5-phospho-beta-D-ribosyl)imidazole-4-carboxamide + L-glutamate + H(+)</text>
        <dbReference type="Rhea" id="RHEA:24793"/>
        <dbReference type="ChEBI" id="CHEBI:15378"/>
        <dbReference type="ChEBI" id="CHEBI:29985"/>
        <dbReference type="ChEBI" id="CHEBI:58278"/>
        <dbReference type="ChEBI" id="CHEBI:58359"/>
        <dbReference type="ChEBI" id="CHEBI:58475"/>
        <dbReference type="ChEBI" id="CHEBI:58525"/>
        <dbReference type="EC" id="4.3.2.10"/>
    </reaction>
</comment>
<comment type="catalytic activity">
    <reaction evidence="1">
        <text>L-glutamine + H2O = L-glutamate + NH4(+)</text>
        <dbReference type="Rhea" id="RHEA:15889"/>
        <dbReference type="ChEBI" id="CHEBI:15377"/>
        <dbReference type="ChEBI" id="CHEBI:28938"/>
        <dbReference type="ChEBI" id="CHEBI:29985"/>
        <dbReference type="ChEBI" id="CHEBI:58359"/>
        <dbReference type="EC" id="3.5.1.2"/>
    </reaction>
</comment>
<comment type="pathway">
    <text evidence="1">Amino-acid biosynthesis; L-histidine biosynthesis; L-histidine from 5-phospho-alpha-D-ribose 1-diphosphate: step 5/9.</text>
</comment>
<comment type="subunit">
    <text evidence="1">Heterodimer of HisH and HisF.</text>
</comment>
<comment type="subcellular location">
    <subcellularLocation>
        <location evidence="1">Cytoplasm</location>
    </subcellularLocation>
</comment>
<proteinExistence type="inferred from homology"/>
<sequence length="209" mass="23268">MIAIIDYGMGNIRSVEQALKYIGAAYIVTSDKEEIFRSDGVILPGVGAFPKAMDILEEKDLVRVLQEIGRSRKPLLGICLGMQLLFEKSEELQDCNGLSLLPGVIRKLKVPYKIPHMGWNELKKEGEIALWNGVEDGSFVYYVHSYYADCPNEIVYGISDYGVKVPGFVAKGNIYGAQFHPEKSGDIGMQILKNFKGVVETWKSSQLSI</sequence>
<accession>C1EMQ5</accession>
<gene>
    <name evidence="1" type="primary">hisH</name>
    <name type="ordered locus">BCA_1463</name>
</gene>
<evidence type="ECO:0000255" key="1">
    <source>
        <dbReference type="HAMAP-Rule" id="MF_00278"/>
    </source>
</evidence>
<keyword id="KW-0028">Amino-acid biosynthesis</keyword>
<keyword id="KW-0963">Cytoplasm</keyword>
<keyword id="KW-0315">Glutamine amidotransferase</keyword>
<keyword id="KW-0368">Histidine biosynthesis</keyword>
<keyword id="KW-0378">Hydrolase</keyword>
<keyword id="KW-0456">Lyase</keyword>
<protein>
    <recommendedName>
        <fullName evidence="1">Imidazole glycerol phosphate synthase subunit HisH</fullName>
        <ecNumber evidence="1">4.3.2.10</ecNumber>
    </recommendedName>
    <alternativeName>
        <fullName evidence="1">IGP synthase glutaminase subunit</fullName>
        <ecNumber evidence="1">3.5.1.2</ecNumber>
    </alternativeName>
    <alternativeName>
        <fullName evidence="1">IGP synthase subunit HisH</fullName>
    </alternativeName>
    <alternativeName>
        <fullName evidence="1">ImGP synthase subunit HisH</fullName>
        <shortName evidence="1">IGPS subunit HisH</shortName>
    </alternativeName>
</protein>
<name>HIS5_BACC3</name>
<organism>
    <name type="scientific">Bacillus cereus (strain 03BB102)</name>
    <dbReference type="NCBI Taxonomy" id="572264"/>
    <lineage>
        <taxon>Bacteria</taxon>
        <taxon>Bacillati</taxon>
        <taxon>Bacillota</taxon>
        <taxon>Bacilli</taxon>
        <taxon>Bacillales</taxon>
        <taxon>Bacillaceae</taxon>
        <taxon>Bacillus</taxon>
        <taxon>Bacillus cereus group</taxon>
    </lineage>
</organism>
<dbReference type="EC" id="4.3.2.10" evidence="1"/>
<dbReference type="EC" id="3.5.1.2" evidence="1"/>
<dbReference type="EMBL" id="CP001407">
    <property type="protein sequence ID" value="ACO26731.1"/>
    <property type="molecule type" value="Genomic_DNA"/>
</dbReference>
<dbReference type="RefSeq" id="WP_000560342.1">
    <property type="nucleotide sequence ID" value="NZ_CP009318.1"/>
</dbReference>
<dbReference type="SMR" id="C1EMQ5"/>
<dbReference type="KEGG" id="bcx:BCA_1463"/>
<dbReference type="PATRIC" id="fig|572264.18.peg.1413"/>
<dbReference type="UniPathway" id="UPA00031">
    <property type="reaction ID" value="UER00010"/>
</dbReference>
<dbReference type="Proteomes" id="UP000002210">
    <property type="component" value="Chromosome"/>
</dbReference>
<dbReference type="GO" id="GO:0005737">
    <property type="term" value="C:cytoplasm"/>
    <property type="evidence" value="ECO:0007669"/>
    <property type="project" value="UniProtKB-SubCell"/>
</dbReference>
<dbReference type="GO" id="GO:0004359">
    <property type="term" value="F:glutaminase activity"/>
    <property type="evidence" value="ECO:0007669"/>
    <property type="project" value="UniProtKB-EC"/>
</dbReference>
<dbReference type="GO" id="GO:0000107">
    <property type="term" value="F:imidazoleglycerol-phosphate synthase activity"/>
    <property type="evidence" value="ECO:0007669"/>
    <property type="project" value="UniProtKB-UniRule"/>
</dbReference>
<dbReference type="GO" id="GO:0016829">
    <property type="term" value="F:lyase activity"/>
    <property type="evidence" value="ECO:0007669"/>
    <property type="project" value="UniProtKB-KW"/>
</dbReference>
<dbReference type="GO" id="GO:0000105">
    <property type="term" value="P:L-histidine biosynthetic process"/>
    <property type="evidence" value="ECO:0007669"/>
    <property type="project" value="UniProtKB-UniRule"/>
</dbReference>
<dbReference type="CDD" id="cd01748">
    <property type="entry name" value="GATase1_IGP_Synthase"/>
    <property type="match status" value="1"/>
</dbReference>
<dbReference type="FunFam" id="3.40.50.880:FF:000028">
    <property type="entry name" value="Imidazole glycerol phosphate synthase subunit HisH"/>
    <property type="match status" value="1"/>
</dbReference>
<dbReference type="Gene3D" id="3.40.50.880">
    <property type="match status" value="1"/>
</dbReference>
<dbReference type="HAMAP" id="MF_00278">
    <property type="entry name" value="HisH"/>
    <property type="match status" value="1"/>
</dbReference>
<dbReference type="InterPro" id="IPR029062">
    <property type="entry name" value="Class_I_gatase-like"/>
</dbReference>
<dbReference type="InterPro" id="IPR017926">
    <property type="entry name" value="GATASE"/>
</dbReference>
<dbReference type="InterPro" id="IPR010139">
    <property type="entry name" value="Imidazole-glycPsynth_HisH"/>
</dbReference>
<dbReference type="NCBIfam" id="TIGR01855">
    <property type="entry name" value="IMP_synth_hisH"/>
    <property type="match status" value="1"/>
</dbReference>
<dbReference type="PANTHER" id="PTHR42701">
    <property type="entry name" value="IMIDAZOLE GLYCEROL PHOSPHATE SYNTHASE SUBUNIT HISH"/>
    <property type="match status" value="1"/>
</dbReference>
<dbReference type="PANTHER" id="PTHR42701:SF1">
    <property type="entry name" value="IMIDAZOLE GLYCEROL PHOSPHATE SYNTHASE SUBUNIT HISH"/>
    <property type="match status" value="1"/>
</dbReference>
<dbReference type="Pfam" id="PF00117">
    <property type="entry name" value="GATase"/>
    <property type="match status" value="1"/>
</dbReference>
<dbReference type="PIRSF" id="PIRSF000495">
    <property type="entry name" value="Amidotransf_hisH"/>
    <property type="match status" value="1"/>
</dbReference>
<dbReference type="SUPFAM" id="SSF52317">
    <property type="entry name" value="Class I glutamine amidotransferase-like"/>
    <property type="match status" value="1"/>
</dbReference>
<dbReference type="PROSITE" id="PS51273">
    <property type="entry name" value="GATASE_TYPE_1"/>
    <property type="match status" value="1"/>
</dbReference>
<reference key="1">
    <citation type="submission" date="2009-02" db="EMBL/GenBank/DDBJ databases">
        <title>Genome sequence of Bacillus cereus 03BB102.</title>
        <authorList>
            <person name="Dodson R.J."/>
            <person name="Jackson P."/>
            <person name="Munk A.C."/>
            <person name="Brettin T."/>
            <person name="Bruce D."/>
            <person name="Detter C."/>
            <person name="Tapia R."/>
            <person name="Han C."/>
            <person name="Sutton G."/>
            <person name="Sims D."/>
        </authorList>
    </citation>
    <scope>NUCLEOTIDE SEQUENCE [LARGE SCALE GENOMIC DNA]</scope>
    <source>
        <strain>03BB102</strain>
    </source>
</reference>